<keyword id="KW-0997">Cell inner membrane</keyword>
<keyword id="KW-1003">Cell membrane</keyword>
<keyword id="KW-0903">Direct protein sequencing</keyword>
<keyword id="KW-0449">Lipoprotein</keyword>
<keyword id="KW-0472">Membrane</keyword>
<keyword id="KW-0564">Palmitate</keyword>
<keyword id="KW-1185">Reference proteome</keyword>
<keyword id="KW-0732">Signal</keyword>
<keyword id="KW-0813">Transport</keyword>
<accession>P24180</accession>
<accession>Q2M8V0</accession>
<protein>
    <recommendedName>
        <fullName>Multidrug export protein AcrE</fullName>
    </recommendedName>
    <alternativeName>
        <fullName>Acriflavine resistance protein E</fullName>
    </alternativeName>
    <alternativeName>
        <fullName>Protein EnvC</fullName>
    </alternativeName>
</protein>
<reference key="1">
    <citation type="submission" date="1993-05" db="EMBL/GenBank/DDBJ databases">
        <title>Nucleotide sequence of the acrEF operon from Escherichia coli.</title>
        <authorList>
            <person name="Xu J."/>
            <person name="Bertrand K.P."/>
        </authorList>
    </citation>
    <scope>NUCLEOTIDE SEQUENCE [GENOMIC DNA]</scope>
    <source>
        <strain>K12</strain>
    </source>
</reference>
<reference key="2">
    <citation type="journal article" date="1991" name="Mol. Gen. Genet.">
        <title>Molecular analysis and nucleotide sequence of the envCD operon of Escherichia coli.</title>
        <authorList>
            <person name="Klein J.R."/>
            <person name="Henrich B."/>
            <person name="Plapp R."/>
        </authorList>
    </citation>
    <scope>NUCLEOTIDE SEQUENCE [GENOMIC DNA]</scope>
    <source>
        <strain>K12</strain>
    </source>
</reference>
<reference key="3">
    <citation type="journal article" date="1997" name="Science">
        <title>The complete genome sequence of Escherichia coli K-12.</title>
        <authorList>
            <person name="Blattner F.R."/>
            <person name="Plunkett G. III"/>
            <person name="Bloch C.A."/>
            <person name="Perna N.T."/>
            <person name="Burland V."/>
            <person name="Riley M."/>
            <person name="Collado-Vides J."/>
            <person name="Glasner J.D."/>
            <person name="Rode C.K."/>
            <person name="Mayhew G.F."/>
            <person name="Gregor J."/>
            <person name="Davis N.W."/>
            <person name="Kirkpatrick H.A."/>
            <person name="Goeden M.A."/>
            <person name="Rose D.J."/>
            <person name="Mau B."/>
            <person name="Shao Y."/>
        </authorList>
    </citation>
    <scope>NUCLEOTIDE SEQUENCE [LARGE SCALE GENOMIC DNA]</scope>
    <source>
        <strain>K12 / MG1655 / ATCC 47076</strain>
    </source>
</reference>
<reference key="4">
    <citation type="journal article" date="2006" name="Mol. Syst. Biol.">
        <title>Highly accurate genome sequences of Escherichia coli K-12 strains MG1655 and W3110.</title>
        <authorList>
            <person name="Hayashi K."/>
            <person name="Morooka N."/>
            <person name="Yamamoto Y."/>
            <person name="Fujita K."/>
            <person name="Isono K."/>
            <person name="Choi S."/>
            <person name="Ohtsubo E."/>
            <person name="Baba T."/>
            <person name="Wanner B.L."/>
            <person name="Mori H."/>
            <person name="Horiuchi T."/>
        </authorList>
    </citation>
    <scope>NUCLEOTIDE SEQUENCE [LARGE SCALE GENOMIC DNA]</scope>
    <source>
        <strain>K12 / W3110 / ATCC 27325 / DSM 5911</strain>
    </source>
</reference>
<reference key="5">
    <citation type="journal article" date="1990" name="Curr. Microbiol.">
        <title>Molecular cloning of the envC gene of Escherichia coli.</title>
        <authorList>
            <person name="Klein J.R."/>
            <person name="Henrich B."/>
            <person name="Plapp R."/>
        </authorList>
    </citation>
    <scope>NUCLEOTIDE SEQUENCE [GENOMIC DNA] OF 1-96</scope>
    <source>
        <strain>K12</strain>
    </source>
</reference>
<reference key="6">
    <citation type="journal article" date="2001" name="J. Bacteriol.">
        <title>Suppression of hypersensitivity of Escherichia coli acrB mutant to organic solvents by integrational activation of the acrEF operon with the IS1 or IS2 element.</title>
        <authorList>
            <person name="Kobayashi K."/>
            <person name="Tsukagoshi N."/>
            <person name="Aono R."/>
        </authorList>
    </citation>
    <scope>PROTEIN SEQUENCE OF 291-299</scope>
    <scope>FUNCTION</scope>
    <scope>SUBUNIT</scope>
    <scope>SUBCELLULAR LOCATION</scope>
</reference>
<reference key="7">
    <citation type="journal article" date="1999" name="FEMS Microbiol. Lett.">
        <title>Role of multiple efflux pumps in Escherichia coli in indole expulsion.</title>
        <authorList>
            <person name="Kawamura-Sato K."/>
            <person name="Shibayama K."/>
            <person name="Horii T."/>
            <person name="Iimuma Y."/>
            <person name="Arakawa Y."/>
            <person name="Ohta M."/>
        </authorList>
    </citation>
    <scope>FUNCTION</scope>
    <source>
        <strain>K12</strain>
    </source>
</reference>
<reference key="8">
    <citation type="journal article" date="2009" name="J. Bacteriol.">
        <title>Involvement of the leucine response transcription factor LeuO in regulation of the genes for sulfa drug efflux.</title>
        <authorList>
            <person name="Shimada T."/>
            <person name="Yamamoto K."/>
            <person name="Ishihama A."/>
        </authorList>
    </citation>
    <scope>OPERON STRUCTURE</scope>
    <scope>INDUCTION</scope>
    <source>
        <strain>K12 / BW25113</strain>
    </source>
</reference>
<dbReference type="EMBL" id="M96848">
    <property type="protein sequence ID" value="AAA02931.1"/>
    <property type="molecule type" value="Unassigned_DNA"/>
</dbReference>
<dbReference type="EMBL" id="X57948">
    <property type="protein sequence ID" value="CAA41016.1"/>
    <property type="molecule type" value="Genomic_DNA"/>
</dbReference>
<dbReference type="EMBL" id="U18997">
    <property type="protein sequence ID" value="AAA58069.1"/>
    <property type="molecule type" value="Genomic_DNA"/>
</dbReference>
<dbReference type="EMBL" id="U00096">
    <property type="protein sequence ID" value="AAC76297.1"/>
    <property type="molecule type" value="Genomic_DNA"/>
</dbReference>
<dbReference type="EMBL" id="AP009048">
    <property type="protein sequence ID" value="BAE77306.1"/>
    <property type="molecule type" value="Genomic_DNA"/>
</dbReference>
<dbReference type="PIR" id="C65119">
    <property type="entry name" value="C65119"/>
</dbReference>
<dbReference type="RefSeq" id="NP_417731.1">
    <property type="nucleotide sequence ID" value="NC_000913.3"/>
</dbReference>
<dbReference type="RefSeq" id="WP_000160334.1">
    <property type="nucleotide sequence ID" value="NZ_STEB01000012.1"/>
</dbReference>
<dbReference type="SMR" id="P24180"/>
<dbReference type="BioGRID" id="4261953">
    <property type="interactions" value="367"/>
</dbReference>
<dbReference type="ComplexPortal" id="CPX-4265">
    <property type="entry name" value="AcrEF-TolC multidrug efflux transport complex"/>
</dbReference>
<dbReference type="FunCoup" id="P24180">
    <property type="interactions" value="648"/>
</dbReference>
<dbReference type="STRING" id="511145.b3265"/>
<dbReference type="CARD" id="ARO:3000499">
    <property type="molecule name" value="AcrE"/>
    <property type="mechanism identifier" value="ARO:0010000"/>
    <property type="mechanism name" value="antibiotic efflux"/>
</dbReference>
<dbReference type="PaxDb" id="511145-b3265"/>
<dbReference type="EnsemblBacteria" id="AAC76297">
    <property type="protein sequence ID" value="AAC76297"/>
    <property type="gene ID" value="b3265"/>
</dbReference>
<dbReference type="GeneID" id="75206113"/>
<dbReference type="GeneID" id="947706"/>
<dbReference type="KEGG" id="ecj:JW3233"/>
<dbReference type="KEGG" id="eco:b3265"/>
<dbReference type="KEGG" id="ecoc:C3026_17760"/>
<dbReference type="PATRIC" id="fig|1411691.4.peg.3463"/>
<dbReference type="EchoBASE" id="EB0262"/>
<dbReference type="eggNOG" id="COG0845">
    <property type="taxonomic scope" value="Bacteria"/>
</dbReference>
<dbReference type="HOGENOM" id="CLU_018816_2_1_6"/>
<dbReference type="InParanoid" id="P24180"/>
<dbReference type="OMA" id="PAKGVPW"/>
<dbReference type="OrthoDB" id="9800613at2"/>
<dbReference type="PhylomeDB" id="P24180"/>
<dbReference type="BioCyc" id="EcoCyc:EG10266-MONOMER"/>
<dbReference type="BioCyc" id="MetaCyc:EG10266-MONOMER"/>
<dbReference type="PRO" id="PR:P24180"/>
<dbReference type="Proteomes" id="UP000000625">
    <property type="component" value="Chromosome"/>
</dbReference>
<dbReference type="GO" id="GO:1990281">
    <property type="term" value="C:efflux pump complex"/>
    <property type="evidence" value="ECO:0000303"/>
    <property type="project" value="ComplexPortal"/>
</dbReference>
<dbReference type="GO" id="GO:0098567">
    <property type="term" value="C:periplasmic side of plasma membrane"/>
    <property type="evidence" value="ECO:0000303"/>
    <property type="project" value="ComplexPortal"/>
</dbReference>
<dbReference type="GO" id="GO:0005886">
    <property type="term" value="C:plasma membrane"/>
    <property type="evidence" value="ECO:0000318"/>
    <property type="project" value="GO_Central"/>
</dbReference>
<dbReference type="GO" id="GO:0022857">
    <property type="term" value="F:transmembrane transporter activity"/>
    <property type="evidence" value="ECO:0007669"/>
    <property type="project" value="InterPro"/>
</dbReference>
<dbReference type="GO" id="GO:0046677">
    <property type="term" value="P:response to antibiotic"/>
    <property type="evidence" value="ECO:0000318"/>
    <property type="project" value="GO_Central"/>
</dbReference>
<dbReference type="GO" id="GO:0009410">
    <property type="term" value="P:response to xenobiotic stimulus"/>
    <property type="evidence" value="ECO:0000250"/>
    <property type="project" value="EcoliWiki"/>
</dbReference>
<dbReference type="GO" id="GO:0140330">
    <property type="term" value="P:xenobiotic detoxification by transmembrane export across the cell outer membrane"/>
    <property type="evidence" value="ECO:0000269"/>
    <property type="project" value="ComplexPortal"/>
</dbReference>
<dbReference type="FunFam" id="1.10.287.470:FF:000002">
    <property type="entry name" value="Efflux RND transporter periplasmic adaptor subunit"/>
    <property type="match status" value="1"/>
</dbReference>
<dbReference type="FunFam" id="2.40.420.20:FF:000001">
    <property type="entry name" value="Efflux RND transporter periplasmic adaptor subunit"/>
    <property type="match status" value="1"/>
</dbReference>
<dbReference type="FunFam" id="2.40.30.170:FF:000001">
    <property type="entry name" value="Multidrug resistance efflux transporter MdtE"/>
    <property type="match status" value="1"/>
</dbReference>
<dbReference type="Gene3D" id="2.40.30.170">
    <property type="match status" value="1"/>
</dbReference>
<dbReference type="Gene3D" id="2.40.420.20">
    <property type="match status" value="1"/>
</dbReference>
<dbReference type="Gene3D" id="2.40.50.100">
    <property type="match status" value="1"/>
</dbReference>
<dbReference type="Gene3D" id="1.10.287.470">
    <property type="entry name" value="Helix hairpin bin"/>
    <property type="match status" value="1"/>
</dbReference>
<dbReference type="InterPro" id="IPR043602">
    <property type="entry name" value="CusB-like_dom_1"/>
</dbReference>
<dbReference type="InterPro" id="IPR032317">
    <property type="entry name" value="CusB_D23"/>
</dbReference>
<dbReference type="InterPro" id="IPR051160">
    <property type="entry name" value="MFP_Efflux"/>
</dbReference>
<dbReference type="InterPro" id="IPR006143">
    <property type="entry name" value="RND_pump_MFP"/>
</dbReference>
<dbReference type="NCBIfam" id="TIGR01730">
    <property type="entry name" value="RND_mfp"/>
    <property type="match status" value="1"/>
</dbReference>
<dbReference type="PANTHER" id="PTHR30158">
    <property type="entry name" value="ACRA/E-RELATED COMPONENT OF DRUG EFFLUX TRANSPORTER"/>
    <property type="match status" value="1"/>
</dbReference>
<dbReference type="PANTHER" id="PTHR30158:SF21">
    <property type="entry name" value="MULTIDRUG EXPORT PROTEIN ACRE"/>
    <property type="match status" value="1"/>
</dbReference>
<dbReference type="Pfam" id="PF00529">
    <property type="entry name" value="CusB_dom_1"/>
    <property type="match status" value="1"/>
</dbReference>
<dbReference type="Pfam" id="PF16576">
    <property type="entry name" value="HlyD_D23"/>
    <property type="match status" value="1"/>
</dbReference>
<dbReference type="SUPFAM" id="SSF111369">
    <property type="entry name" value="HlyD-like secretion proteins"/>
    <property type="match status" value="1"/>
</dbReference>
<dbReference type="PROSITE" id="PS51257">
    <property type="entry name" value="PROKAR_LIPOPROTEIN"/>
    <property type="match status" value="1"/>
</dbReference>
<feature type="signal peptide" evidence="1">
    <location>
        <begin position="1"/>
        <end position="23"/>
    </location>
</feature>
<feature type="chain" id="PRO_0000018688" description="Multidrug export protein AcrE">
    <location>
        <begin position="24"/>
        <end position="385"/>
    </location>
</feature>
<feature type="region of interest" description="Disordered" evidence="2">
    <location>
        <begin position="366"/>
        <end position="385"/>
    </location>
</feature>
<feature type="compositionally biased region" description="Polar residues" evidence="2">
    <location>
        <begin position="373"/>
        <end position="385"/>
    </location>
</feature>
<feature type="lipid moiety-binding region" description="N-palmitoyl cysteine" evidence="1">
    <location>
        <position position="24"/>
    </location>
</feature>
<feature type="lipid moiety-binding region" description="S-diacylglycerol cysteine" evidence="1">
    <location>
        <position position="24"/>
    </location>
</feature>
<feature type="sequence conflict" description="In Ref. 2." evidence="6" ref="2">
    <original>GALVTNGQTTELATVQQLDPIY</original>
    <variation>ALLSLMGKRLNWRLSSSSILST</variation>
    <location>
        <begin position="191"/>
        <end position="212"/>
    </location>
</feature>
<feature type="sequence conflict" description="In Ref. 2." evidence="6" ref="2">
    <original>SR</original>
    <variation>T</variation>
    <location>
        <begin position="313"/>
        <end position="314"/>
    </location>
</feature>
<evidence type="ECO:0000255" key="1">
    <source>
        <dbReference type="PROSITE-ProRule" id="PRU00303"/>
    </source>
</evidence>
<evidence type="ECO:0000256" key="2">
    <source>
        <dbReference type="SAM" id="MobiDB-lite"/>
    </source>
</evidence>
<evidence type="ECO:0000269" key="3">
    <source>
    </source>
</evidence>
<evidence type="ECO:0000269" key="4">
    <source>
    </source>
</evidence>
<evidence type="ECO:0000269" key="5">
    <source>
    </source>
</evidence>
<evidence type="ECO:0000305" key="6"/>
<evidence type="ECO:0000305" key="7">
    <source>
    </source>
</evidence>
<proteinExistence type="evidence at protein level"/>
<sequence length="385" mass="41318">MTKHARFFLLPSFILISAALIAGCNDKGEEKAHVGEPQVTVHIVKTAPLEVKTELPGRTNAYRIAEVRPQVSGIVLNRNFTEGSDVQAGQSLYQIDPATYQANYDSAKGELAKSEAAAAIAHLTVKRYVPLVGTKYISQQEYDQAIADARQADAAVIAAKATVESARINLAYTKVTAPISGRIGKSTVTEGALVTNGQTTELATVQQLDPIYVDVTQSSNDFMRLKQSVEQGNLHKENATSNVELVMENGQTYPLKGTLQFSDVTVDESTGSITLRAVFPNPQHTLLPGMFVRARIDEGVQPDAILIPQQGVSRTPRGDATVLIVNDKSQVEARPVVASQAIGDKWLISEGLKSGDQVIVSGLQKARPGEQVKATTDTPADTASK</sequence>
<comment type="function">
    <text evidence="3 4">Part of the tripartite efflux system AcrEF-TolC. Involved in the efflux of indole and organic solvents.</text>
</comment>
<comment type="subunit">
    <text evidence="7">Part of the tripartite efflux system AcrEF-TolC, which is composed of an inner membrane transporter, AcrF, a periplasmic membrane fusion protein, AcrE, and an outer membrane component, TolC. The complex forms a large protein conduit and can translocate molecules across both the inner and outer membranes (Probable).</text>
</comment>
<comment type="subcellular location">
    <subcellularLocation>
        <location evidence="7">Cell inner membrane</location>
        <topology evidence="7">Lipid-anchor</topology>
    </subcellularLocation>
</comment>
<comment type="induction">
    <text evidence="5">Induced by LeuO, part of the acrEF operon.</text>
</comment>
<comment type="similarity">
    <text evidence="6">Belongs to the membrane fusion protein (MFP) (TC 8.A.1) family.</text>
</comment>
<organism>
    <name type="scientific">Escherichia coli (strain K12)</name>
    <dbReference type="NCBI Taxonomy" id="83333"/>
    <lineage>
        <taxon>Bacteria</taxon>
        <taxon>Pseudomonadati</taxon>
        <taxon>Pseudomonadota</taxon>
        <taxon>Gammaproteobacteria</taxon>
        <taxon>Enterobacterales</taxon>
        <taxon>Enterobacteriaceae</taxon>
        <taxon>Escherichia</taxon>
    </lineage>
</organism>
<name>ACRE_ECOLI</name>
<gene>
    <name type="primary">acrE</name>
    <name type="synonym">envC</name>
    <name type="ordered locus">b3265</name>
    <name type="ordered locus">JW3233</name>
</gene>